<feature type="chain" id="PRO_0000264289" description="Protein-glutamate methylesterase/protein-glutamine glutaminase">
    <location>
        <begin position="1"/>
        <end position="401"/>
    </location>
</feature>
<feature type="domain" description="Response regulatory" evidence="1">
    <location>
        <begin position="16"/>
        <end position="134"/>
    </location>
</feature>
<feature type="domain" description="CheB-type methylesterase" evidence="1">
    <location>
        <begin position="205"/>
        <end position="400"/>
    </location>
</feature>
<feature type="region of interest" description="Disordered" evidence="2">
    <location>
        <begin position="146"/>
        <end position="208"/>
    </location>
</feature>
<feature type="compositionally biased region" description="Low complexity" evidence="2">
    <location>
        <begin position="166"/>
        <end position="176"/>
    </location>
</feature>
<feature type="compositionally biased region" description="Low complexity" evidence="2">
    <location>
        <begin position="185"/>
        <end position="199"/>
    </location>
</feature>
<feature type="active site" evidence="1">
    <location>
        <position position="219"/>
    </location>
</feature>
<feature type="active site" evidence="1">
    <location>
        <position position="246"/>
    </location>
</feature>
<feature type="active site" evidence="1">
    <location>
        <position position="342"/>
    </location>
</feature>
<feature type="modified residue" description="4-aspartylphosphate" evidence="1">
    <location>
        <position position="67"/>
    </location>
</feature>
<name>CHEB_MARMM</name>
<reference key="1">
    <citation type="submission" date="2006-08" db="EMBL/GenBank/DDBJ databases">
        <title>Complete sequence of Maricaulis maris MCS10.</title>
        <authorList>
            <consortium name="US DOE Joint Genome Institute"/>
            <person name="Copeland A."/>
            <person name="Lucas S."/>
            <person name="Lapidus A."/>
            <person name="Barry K."/>
            <person name="Detter J.C."/>
            <person name="Glavina del Rio T."/>
            <person name="Hammon N."/>
            <person name="Israni S."/>
            <person name="Dalin E."/>
            <person name="Tice H."/>
            <person name="Pitluck S."/>
            <person name="Saunders E."/>
            <person name="Brettin T."/>
            <person name="Bruce D."/>
            <person name="Han C."/>
            <person name="Tapia R."/>
            <person name="Gilna P."/>
            <person name="Schmutz J."/>
            <person name="Larimer F."/>
            <person name="Land M."/>
            <person name="Hauser L."/>
            <person name="Kyrpides N."/>
            <person name="Mikhailova N."/>
            <person name="Viollier P."/>
            <person name="Stephens C."/>
            <person name="Richardson P."/>
        </authorList>
    </citation>
    <scope>NUCLEOTIDE SEQUENCE [LARGE SCALE GENOMIC DNA]</scope>
    <source>
        <strain>MCS10</strain>
    </source>
</reference>
<accession>Q0ARY3</accession>
<proteinExistence type="inferred from homology"/>
<dbReference type="EC" id="3.1.1.61" evidence="1"/>
<dbReference type="EC" id="3.5.1.44" evidence="1"/>
<dbReference type="EMBL" id="CP000449">
    <property type="protein sequence ID" value="ABI64954.1"/>
    <property type="molecule type" value="Genomic_DNA"/>
</dbReference>
<dbReference type="RefSeq" id="WP_011642601.1">
    <property type="nucleotide sequence ID" value="NC_008347.1"/>
</dbReference>
<dbReference type="SMR" id="Q0ARY3"/>
<dbReference type="STRING" id="394221.Mmar10_0661"/>
<dbReference type="KEGG" id="mmr:Mmar10_0661"/>
<dbReference type="eggNOG" id="COG2201">
    <property type="taxonomic scope" value="Bacteria"/>
</dbReference>
<dbReference type="HOGENOM" id="CLU_000445_51_0_5"/>
<dbReference type="OrthoDB" id="9793421at2"/>
<dbReference type="Proteomes" id="UP000001964">
    <property type="component" value="Chromosome"/>
</dbReference>
<dbReference type="GO" id="GO:0005737">
    <property type="term" value="C:cytoplasm"/>
    <property type="evidence" value="ECO:0007669"/>
    <property type="project" value="UniProtKB-SubCell"/>
</dbReference>
<dbReference type="GO" id="GO:0000156">
    <property type="term" value="F:phosphorelay response regulator activity"/>
    <property type="evidence" value="ECO:0007669"/>
    <property type="project" value="InterPro"/>
</dbReference>
<dbReference type="GO" id="GO:0008984">
    <property type="term" value="F:protein-glutamate methylesterase activity"/>
    <property type="evidence" value="ECO:0007669"/>
    <property type="project" value="UniProtKB-UniRule"/>
</dbReference>
<dbReference type="GO" id="GO:0050568">
    <property type="term" value="F:protein-glutamine glutaminase activity"/>
    <property type="evidence" value="ECO:0007669"/>
    <property type="project" value="UniProtKB-UniRule"/>
</dbReference>
<dbReference type="GO" id="GO:0006935">
    <property type="term" value="P:chemotaxis"/>
    <property type="evidence" value="ECO:0007669"/>
    <property type="project" value="UniProtKB-UniRule"/>
</dbReference>
<dbReference type="CDD" id="cd16432">
    <property type="entry name" value="CheB_Rec"/>
    <property type="match status" value="1"/>
</dbReference>
<dbReference type="CDD" id="cd17541">
    <property type="entry name" value="REC_CheB-like"/>
    <property type="match status" value="1"/>
</dbReference>
<dbReference type="Gene3D" id="3.40.50.2300">
    <property type="match status" value="1"/>
</dbReference>
<dbReference type="Gene3D" id="3.40.50.180">
    <property type="entry name" value="Methylesterase CheB, C-terminal domain"/>
    <property type="match status" value="1"/>
</dbReference>
<dbReference type="HAMAP" id="MF_00099">
    <property type="entry name" value="CheB_chemtxs"/>
    <property type="match status" value="1"/>
</dbReference>
<dbReference type="InterPro" id="IPR008248">
    <property type="entry name" value="CheB-like"/>
</dbReference>
<dbReference type="InterPro" id="IPR035909">
    <property type="entry name" value="CheB_C"/>
</dbReference>
<dbReference type="InterPro" id="IPR011006">
    <property type="entry name" value="CheY-like_superfamily"/>
</dbReference>
<dbReference type="InterPro" id="IPR000673">
    <property type="entry name" value="Sig_transdc_resp-reg_Me-estase"/>
</dbReference>
<dbReference type="InterPro" id="IPR001789">
    <property type="entry name" value="Sig_transdc_resp-reg_receiver"/>
</dbReference>
<dbReference type="NCBIfam" id="NF001965">
    <property type="entry name" value="PRK00742.1"/>
    <property type="match status" value="1"/>
</dbReference>
<dbReference type="PANTHER" id="PTHR42872">
    <property type="entry name" value="PROTEIN-GLUTAMATE METHYLESTERASE/PROTEIN-GLUTAMINE GLUTAMINASE"/>
    <property type="match status" value="1"/>
</dbReference>
<dbReference type="PANTHER" id="PTHR42872:SF3">
    <property type="entry name" value="PROTEIN-GLUTAMATE METHYLESTERASE_PROTEIN-GLUTAMINE GLUTAMINASE 1"/>
    <property type="match status" value="1"/>
</dbReference>
<dbReference type="Pfam" id="PF01339">
    <property type="entry name" value="CheB_methylest"/>
    <property type="match status" value="1"/>
</dbReference>
<dbReference type="Pfam" id="PF00072">
    <property type="entry name" value="Response_reg"/>
    <property type="match status" value="1"/>
</dbReference>
<dbReference type="PIRSF" id="PIRSF000876">
    <property type="entry name" value="RR_chemtxs_CheB"/>
    <property type="match status" value="1"/>
</dbReference>
<dbReference type="SMART" id="SM00448">
    <property type="entry name" value="REC"/>
    <property type="match status" value="1"/>
</dbReference>
<dbReference type="SUPFAM" id="SSF52172">
    <property type="entry name" value="CheY-like"/>
    <property type="match status" value="1"/>
</dbReference>
<dbReference type="SUPFAM" id="SSF52738">
    <property type="entry name" value="Methylesterase CheB, C-terminal domain"/>
    <property type="match status" value="1"/>
</dbReference>
<dbReference type="PROSITE" id="PS50122">
    <property type="entry name" value="CHEB"/>
    <property type="match status" value="1"/>
</dbReference>
<dbReference type="PROSITE" id="PS50110">
    <property type="entry name" value="RESPONSE_REGULATORY"/>
    <property type="match status" value="1"/>
</dbReference>
<comment type="function">
    <text evidence="1">Involved in chemotaxis. Part of a chemotaxis signal transduction system that modulates chemotaxis in response to various stimuli. Catalyzes the demethylation of specific methylglutamate residues introduced into the chemoreceptors (methyl-accepting chemotaxis proteins or MCP) by CheR. Also mediates the irreversible deamidation of specific glutamine residues to glutamic acid.</text>
</comment>
<comment type="catalytic activity">
    <reaction evidence="1">
        <text>[protein]-L-glutamate 5-O-methyl ester + H2O = L-glutamyl-[protein] + methanol + H(+)</text>
        <dbReference type="Rhea" id="RHEA:23236"/>
        <dbReference type="Rhea" id="RHEA-COMP:10208"/>
        <dbReference type="Rhea" id="RHEA-COMP:10311"/>
        <dbReference type="ChEBI" id="CHEBI:15377"/>
        <dbReference type="ChEBI" id="CHEBI:15378"/>
        <dbReference type="ChEBI" id="CHEBI:17790"/>
        <dbReference type="ChEBI" id="CHEBI:29973"/>
        <dbReference type="ChEBI" id="CHEBI:82795"/>
        <dbReference type="EC" id="3.1.1.61"/>
    </reaction>
</comment>
<comment type="catalytic activity">
    <reaction evidence="1">
        <text>L-glutaminyl-[protein] + H2O = L-glutamyl-[protein] + NH4(+)</text>
        <dbReference type="Rhea" id="RHEA:16441"/>
        <dbReference type="Rhea" id="RHEA-COMP:10207"/>
        <dbReference type="Rhea" id="RHEA-COMP:10208"/>
        <dbReference type="ChEBI" id="CHEBI:15377"/>
        <dbReference type="ChEBI" id="CHEBI:28938"/>
        <dbReference type="ChEBI" id="CHEBI:29973"/>
        <dbReference type="ChEBI" id="CHEBI:30011"/>
        <dbReference type="EC" id="3.5.1.44"/>
    </reaction>
</comment>
<comment type="subcellular location">
    <subcellularLocation>
        <location evidence="1">Cytoplasm</location>
    </subcellularLocation>
</comment>
<comment type="domain">
    <text evidence="1">Contains a C-terminal catalytic domain, and an N-terminal region which modulates catalytic activity.</text>
</comment>
<comment type="PTM">
    <text evidence="1">Phosphorylated by CheA. Phosphorylation of the N-terminal regulatory domain activates the methylesterase activity.</text>
</comment>
<comment type="similarity">
    <text evidence="1">Belongs to the CheB family.</text>
</comment>
<keyword id="KW-0145">Chemotaxis</keyword>
<keyword id="KW-0963">Cytoplasm</keyword>
<keyword id="KW-0378">Hydrolase</keyword>
<keyword id="KW-0597">Phosphoprotein</keyword>
<keyword id="KW-1185">Reference proteome</keyword>
<protein>
    <recommendedName>
        <fullName evidence="1">Protein-glutamate methylesterase/protein-glutamine glutaminase</fullName>
        <ecNumber evidence="1">3.1.1.61</ecNumber>
        <ecNumber evidence="1">3.5.1.44</ecNumber>
    </recommendedName>
</protein>
<gene>
    <name evidence="1" type="primary">cheB</name>
    <name type="ordered locus">Mmar10_0661</name>
</gene>
<sequence length="401" mass="41825">MTELAPKASPAHSIARVLVIDDSAVARGLMTRWVEEDSDLTLIGSAVDGEQGLRKAEELKPDLIVLDVEMPKMDGLAALPLLLKAVPGCKIVMASTLTRRGGEVTIRALSMGAADYASKPQAGRLAGAEEFRRDLLLKLKALAPRPIPPVPTQRDMAPSPAPATPAAPGAPVARSITPPPPPSSSAPAKKAFAPVAQPPQGRGTPRNTARPEIIAIGSSTGGPQALRDVIAAFPADVRSPIVIAQHMPALFTKILAEHLTKAGKLVCKEAEDNERLKPGCVYIAPGDFHMTIRKDAAGFYAVLDQTPPINFCRPAVDPLFQSVAEVTRGAALGIVLTGMGHDGREGARMLRSVGGTILAQDEATSVVWGMPGAVAEAGLADEILSLADMGPGIVRRAKGGN</sequence>
<evidence type="ECO:0000255" key="1">
    <source>
        <dbReference type="HAMAP-Rule" id="MF_00099"/>
    </source>
</evidence>
<evidence type="ECO:0000256" key="2">
    <source>
        <dbReference type="SAM" id="MobiDB-lite"/>
    </source>
</evidence>
<organism>
    <name type="scientific">Maricaulis maris (strain MCS10)</name>
    <name type="common">Caulobacter maris</name>
    <dbReference type="NCBI Taxonomy" id="394221"/>
    <lineage>
        <taxon>Bacteria</taxon>
        <taxon>Pseudomonadati</taxon>
        <taxon>Pseudomonadota</taxon>
        <taxon>Alphaproteobacteria</taxon>
        <taxon>Maricaulales</taxon>
        <taxon>Maricaulaceae</taxon>
        <taxon>Maricaulis</taxon>
    </lineage>
</organism>